<feature type="chain" id="PRO_0000274484" description="RING finger protein 112">
    <location>
        <begin position="1"/>
        <end position="628"/>
    </location>
</feature>
<feature type="transmembrane region" description="Helical" evidence="2">
    <location>
        <begin position="544"/>
        <end position="564"/>
    </location>
</feature>
<feature type="transmembrane region" description="Helical" evidence="2">
    <location>
        <begin position="577"/>
        <end position="597"/>
    </location>
</feature>
<feature type="domain" description="GB1/RHD3-type G" evidence="4">
    <location>
        <begin position="167"/>
        <end position="409"/>
    </location>
</feature>
<feature type="zinc finger region" description="RING-type" evidence="3">
    <location>
        <begin position="57"/>
        <end position="98"/>
    </location>
</feature>
<feature type="region of interest" description="Interaction with ZBTB16" evidence="1">
    <location>
        <begin position="132"/>
        <end position="628"/>
    </location>
</feature>
<feature type="binding site" evidence="1">
    <location>
        <begin position="318"/>
        <end position="319"/>
    </location>
    <ligand>
        <name>GTP</name>
        <dbReference type="ChEBI" id="CHEBI:37565"/>
    </ligand>
</feature>
<keyword id="KW-0966">Cell projection</keyword>
<keyword id="KW-0963">Cytoplasm</keyword>
<keyword id="KW-0968">Cytoplasmic vesicle</keyword>
<keyword id="KW-0967">Endosome</keyword>
<keyword id="KW-0342">GTP-binding</keyword>
<keyword id="KW-0472">Membrane</keyword>
<keyword id="KW-0479">Metal-binding</keyword>
<keyword id="KW-0524">Neurogenesis</keyword>
<keyword id="KW-0547">Nucleotide-binding</keyword>
<keyword id="KW-0539">Nucleus</keyword>
<keyword id="KW-1185">Reference proteome</keyword>
<keyword id="KW-0770">Synapse</keyword>
<keyword id="KW-0808">Transferase</keyword>
<keyword id="KW-0812">Transmembrane</keyword>
<keyword id="KW-1133">Transmembrane helix</keyword>
<keyword id="KW-0832">Ubl conjugation</keyword>
<keyword id="KW-0833">Ubl conjugation pathway</keyword>
<keyword id="KW-0862">Zinc</keyword>
<keyword id="KW-0863">Zinc-finger</keyword>
<gene>
    <name type="primary">RNF112</name>
    <name type="synonym">ZNF179</name>
</gene>
<sequence>MPRSALSVISFCHRLGKQERKRSFMGNSSNSWSHTPFPKLELGLGSRPTAPREPPACSICLERPREPISLDCGHDFCPRCFSTHRVPGCGPPCCPECRKTCKRRKGLRGLGERMRLLPQRPLPAAALQETCAVRAEPLLLVRINASGGLILRMGAINRCLKHPLARDTPVCLLAVLGGPHSGKTFLLNHLLQGLPGLASGEGSWPRSAGSGQGFRWGANGLSRGIWMWSHPFLLGKEGRKVAVFLVDTGDVMSPELSRETRTRLCALTSMLSSYQILTASQELKDTDLEHLETFVHVAEVMGRHYGMVPIQHLDLLVRDSSHPSKAWQGHVGDVIQKSSGKYPKVQGLLQGRRARCYLLPAPGRRWASRGHGSSGDDDAGRLRAYVADVLSAAPQHAKSRCPGYWSEGRPAARGDRRLLTGQQLAQEVKNLSGWMGRTGPSCASPDEMAAQLHDLRTVEAAKKEFEEYVRQQDAATKRIFSALRVLPDTMRNLLSAQKDTLLARHGATLLCTGREQTLEALEAELQAEAKAFMDSYTVRFCGHLAAVGGAVGAGLMGLAGGVVGAGMAAAALAAEAGMVAAGAAVGATGAAVVGGGVGAGLAATVGCMEKEEDERVQEGDREPLLQEE</sequence>
<dbReference type="EC" id="2.3.2.27" evidence="5"/>
<dbReference type="EMBL" id="BC123783">
    <property type="protein sequence ID" value="AAI23784.1"/>
    <property type="molecule type" value="mRNA"/>
</dbReference>
<dbReference type="RefSeq" id="NP_001070607.1">
    <property type="nucleotide sequence ID" value="NM_001077139.1"/>
</dbReference>
<dbReference type="SMR" id="Q08DF2"/>
<dbReference type="FunCoup" id="Q08DF2">
    <property type="interactions" value="595"/>
</dbReference>
<dbReference type="STRING" id="9913.ENSBTAP00000000703"/>
<dbReference type="GeneID" id="768085"/>
<dbReference type="KEGG" id="bta:768085"/>
<dbReference type="CTD" id="7732"/>
<dbReference type="VEuPathDB" id="HostDB:ENSBTAG00000000540"/>
<dbReference type="eggNOG" id="KOG2037">
    <property type="taxonomic scope" value="Eukaryota"/>
</dbReference>
<dbReference type="eggNOG" id="KOG2177">
    <property type="taxonomic scope" value="Eukaryota"/>
</dbReference>
<dbReference type="InParanoid" id="Q08DF2"/>
<dbReference type="OrthoDB" id="6270329at2759"/>
<dbReference type="UniPathway" id="UPA00143"/>
<dbReference type="Proteomes" id="UP000009136">
    <property type="component" value="Chromosome 19"/>
</dbReference>
<dbReference type="Bgee" id="ENSBTAG00000000540">
    <property type="expression patterns" value="Expressed in Ammon's horn and 89 other cell types or tissues"/>
</dbReference>
<dbReference type="GO" id="GO:0044297">
    <property type="term" value="C:cell body"/>
    <property type="evidence" value="ECO:0000250"/>
    <property type="project" value="UniProtKB"/>
</dbReference>
<dbReference type="GO" id="GO:0005737">
    <property type="term" value="C:cytoplasm"/>
    <property type="evidence" value="ECO:0000250"/>
    <property type="project" value="UniProtKB"/>
</dbReference>
<dbReference type="GO" id="GO:0005768">
    <property type="term" value="C:endosome"/>
    <property type="evidence" value="ECO:0000250"/>
    <property type="project" value="UniProtKB"/>
</dbReference>
<dbReference type="GO" id="GO:0016020">
    <property type="term" value="C:membrane"/>
    <property type="evidence" value="ECO:0007669"/>
    <property type="project" value="UniProtKB-SubCell"/>
</dbReference>
<dbReference type="GO" id="GO:0043005">
    <property type="term" value="C:neuron projection"/>
    <property type="evidence" value="ECO:0007669"/>
    <property type="project" value="UniProtKB-SubCell"/>
</dbReference>
<dbReference type="GO" id="GO:0016604">
    <property type="term" value="C:nuclear body"/>
    <property type="evidence" value="ECO:0000250"/>
    <property type="project" value="UniProtKB"/>
</dbReference>
<dbReference type="GO" id="GO:0005654">
    <property type="term" value="C:nucleoplasm"/>
    <property type="evidence" value="ECO:0000250"/>
    <property type="project" value="UniProtKB"/>
</dbReference>
<dbReference type="GO" id="GO:0005634">
    <property type="term" value="C:nucleus"/>
    <property type="evidence" value="ECO:0000250"/>
    <property type="project" value="UniProtKB"/>
</dbReference>
<dbReference type="GO" id="GO:0043204">
    <property type="term" value="C:perikaryon"/>
    <property type="evidence" value="ECO:0007669"/>
    <property type="project" value="UniProtKB-SubCell"/>
</dbReference>
<dbReference type="GO" id="GO:0014069">
    <property type="term" value="C:postsynaptic density"/>
    <property type="evidence" value="ECO:0000250"/>
    <property type="project" value="UniProtKB"/>
</dbReference>
<dbReference type="GO" id="GO:0008021">
    <property type="term" value="C:synaptic vesicle"/>
    <property type="evidence" value="ECO:0000250"/>
    <property type="project" value="UniProtKB"/>
</dbReference>
<dbReference type="GO" id="GO:0005525">
    <property type="term" value="F:GTP binding"/>
    <property type="evidence" value="ECO:0000250"/>
    <property type="project" value="UniProtKB"/>
</dbReference>
<dbReference type="GO" id="GO:0003924">
    <property type="term" value="F:GTPase activity"/>
    <property type="evidence" value="ECO:0000250"/>
    <property type="project" value="UniProtKB"/>
</dbReference>
<dbReference type="GO" id="GO:0061630">
    <property type="term" value="F:ubiquitin protein ligase activity"/>
    <property type="evidence" value="ECO:0000250"/>
    <property type="project" value="UniProtKB"/>
</dbReference>
<dbReference type="GO" id="GO:0008270">
    <property type="term" value="F:zinc ion binding"/>
    <property type="evidence" value="ECO:0007669"/>
    <property type="project" value="UniProtKB-KW"/>
</dbReference>
<dbReference type="GO" id="GO:1990403">
    <property type="term" value="P:embryonic brain development"/>
    <property type="evidence" value="ECO:0000250"/>
    <property type="project" value="UniProtKB"/>
</dbReference>
<dbReference type="GO" id="GO:0007029">
    <property type="term" value="P:endoplasmic reticulum organization"/>
    <property type="evidence" value="ECO:0000318"/>
    <property type="project" value="GO_Central"/>
</dbReference>
<dbReference type="GO" id="GO:0030182">
    <property type="term" value="P:neuron differentiation"/>
    <property type="evidence" value="ECO:0000250"/>
    <property type="project" value="UniProtKB"/>
</dbReference>
<dbReference type="GO" id="GO:0051865">
    <property type="term" value="P:protein autoubiquitination"/>
    <property type="evidence" value="ECO:0000250"/>
    <property type="project" value="UniProtKB"/>
</dbReference>
<dbReference type="GO" id="GO:0051260">
    <property type="term" value="P:protein homooligomerization"/>
    <property type="evidence" value="ECO:0000318"/>
    <property type="project" value="GO_Central"/>
</dbReference>
<dbReference type="GO" id="GO:0051726">
    <property type="term" value="P:regulation of cell cycle"/>
    <property type="evidence" value="ECO:0000250"/>
    <property type="project" value="UniProtKB"/>
</dbReference>
<dbReference type="GO" id="GO:0033194">
    <property type="term" value="P:response to hydroperoxide"/>
    <property type="evidence" value="ECO:0000250"/>
    <property type="project" value="UniProtKB"/>
</dbReference>
<dbReference type="CDD" id="cd16538">
    <property type="entry name" value="RING-HC_RNF112"/>
    <property type="match status" value="1"/>
</dbReference>
<dbReference type="FunFam" id="3.40.50.300:FF:001009">
    <property type="entry name" value="RING finger protein 112"/>
    <property type="match status" value="1"/>
</dbReference>
<dbReference type="Gene3D" id="3.40.50.300">
    <property type="entry name" value="P-loop containing nucleotide triphosphate hydrolases"/>
    <property type="match status" value="1"/>
</dbReference>
<dbReference type="Gene3D" id="3.30.40.10">
    <property type="entry name" value="Zinc/RING finger domain, C3HC4 (zinc finger)"/>
    <property type="match status" value="1"/>
</dbReference>
<dbReference type="InterPro" id="IPR030386">
    <property type="entry name" value="G_GB1_RHD3_dom"/>
</dbReference>
<dbReference type="InterPro" id="IPR015894">
    <property type="entry name" value="Guanylate-bd_N"/>
</dbReference>
<dbReference type="InterPro" id="IPR027417">
    <property type="entry name" value="P-loop_NTPase"/>
</dbReference>
<dbReference type="InterPro" id="IPR018957">
    <property type="entry name" value="Znf_C3HC4_RING-type"/>
</dbReference>
<dbReference type="InterPro" id="IPR001841">
    <property type="entry name" value="Znf_RING"/>
</dbReference>
<dbReference type="InterPro" id="IPR013083">
    <property type="entry name" value="Znf_RING/FYVE/PHD"/>
</dbReference>
<dbReference type="PANTHER" id="PTHR10751">
    <property type="entry name" value="GUANYLATE BINDING PROTEIN"/>
    <property type="match status" value="1"/>
</dbReference>
<dbReference type="Pfam" id="PF02263">
    <property type="entry name" value="GBP"/>
    <property type="match status" value="1"/>
</dbReference>
<dbReference type="Pfam" id="PF00097">
    <property type="entry name" value="zf-C3HC4"/>
    <property type="match status" value="1"/>
</dbReference>
<dbReference type="SMART" id="SM00184">
    <property type="entry name" value="RING"/>
    <property type="match status" value="1"/>
</dbReference>
<dbReference type="SUPFAM" id="SSF52540">
    <property type="entry name" value="P-loop containing nucleoside triphosphate hydrolases"/>
    <property type="match status" value="1"/>
</dbReference>
<dbReference type="SUPFAM" id="SSF57850">
    <property type="entry name" value="RING/U-box"/>
    <property type="match status" value="1"/>
</dbReference>
<dbReference type="PROSITE" id="PS51715">
    <property type="entry name" value="G_GB1_RHD3"/>
    <property type="match status" value="1"/>
</dbReference>
<dbReference type="PROSITE" id="PS50089">
    <property type="entry name" value="ZF_RING_2"/>
    <property type="match status" value="1"/>
</dbReference>
<organism>
    <name type="scientific">Bos taurus</name>
    <name type="common">Bovine</name>
    <dbReference type="NCBI Taxonomy" id="9913"/>
    <lineage>
        <taxon>Eukaryota</taxon>
        <taxon>Metazoa</taxon>
        <taxon>Chordata</taxon>
        <taxon>Craniata</taxon>
        <taxon>Vertebrata</taxon>
        <taxon>Euteleostomi</taxon>
        <taxon>Mammalia</taxon>
        <taxon>Eutheria</taxon>
        <taxon>Laurasiatheria</taxon>
        <taxon>Artiodactyla</taxon>
        <taxon>Ruminantia</taxon>
        <taxon>Pecora</taxon>
        <taxon>Bovidae</taxon>
        <taxon>Bovinae</taxon>
        <taxon>Bos</taxon>
    </lineage>
</organism>
<evidence type="ECO:0000250" key="1">
    <source>
        <dbReference type="UniProtKB" id="Q96DY5"/>
    </source>
</evidence>
<evidence type="ECO:0000255" key="2"/>
<evidence type="ECO:0000255" key="3">
    <source>
        <dbReference type="PROSITE-ProRule" id="PRU00175"/>
    </source>
</evidence>
<evidence type="ECO:0000255" key="4">
    <source>
        <dbReference type="PROSITE-ProRule" id="PRU01052"/>
    </source>
</evidence>
<evidence type="ECO:0000305" key="5"/>
<comment type="function">
    <text evidence="1">E3 ubiquitin-protein ligase that plays an important role in neuronal differentiation, including neurogenesis and gliogenesis, during brain development. During embryonic development initiates neuronal differentiation by inducing cell cycle arrest at the G0/G1 phase through up-regulation of cell-cycle regulatory proteins. Plays a role not only in the fetal period during the development of the nervous system, but also in the adult brain, where it is involved in the maintenance of neural functions and protection of the nervous tissue cells from oxidative stress-induced damage. Exhibits GTPase and E3 ubiquitin-protein ligase activities. Regulates dendritic spine density and synaptic neurotransmission; its ability to hydrolyze GTP is involved in the maintenance of dendritic spine density.</text>
</comment>
<comment type="catalytic activity">
    <reaction evidence="5">
        <text>S-ubiquitinyl-[E2 ubiquitin-conjugating enzyme]-L-cysteine + [acceptor protein]-L-lysine = [E2 ubiquitin-conjugating enzyme]-L-cysteine + N(6)-ubiquitinyl-[acceptor protein]-L-lysine.</text>
        <dbReference type="EC" id="2.3.2.27"/>
    </reaction>
</comment>
<comment type="pathway">
    <text evidence="5">Protein modification; protein ubiquitination.</text>
</comment>
<comment type="subunit">
    <text evidence="1">Self-associates. Interacts with SP1 in an oxidative stress-regulated manner. Interacts with SIGMAR1 in an oxidative stress-regulated manner. Interacts with ZBTB16 (via C2H2-type zinc finger domains 1 and 2).</text>
</comment>
<comment type="subcellular location">
    <subcellularLocation>
        <location evidence="1">Membrane</location>
        <topology evidence="2">Multi-pass membrane protein</topology>
    </subcellularLocation>
    <subcellularLocation>
        <location evidence="1">Membrane</location>
        <topology evidence="1">Peripheral membrane protein</topology>
    </subcellularLocation>
    <subcellularLocation>
        <location evidence="1">Cytoplasm</location>
    </subcellularLocation>
    <subcellularLocation>
        <location evidence="1">Nucleus</location>
    </subcellularLocation>
    <subcellularLocation>
        <location evidence="1">Nucleus</location>
        <location evidence="1">Nuclear body</location>
    </subcellularLocation>
    <subcellularLocation>
        <location evidence="1">Nucleus</location>
        <location evidence="1">Nucleoplasm</location>
    </subcellularLocation>
    <subcellularLocation>
        <location evidence="1">Endosome</location>
    </subcellularLocation>
    <subcellularLocation>
        <location evidence="1">Cytoplasmic vesicle</location>
        <location evidence="1">Secretory vesicle</location>
        <location evidence="1">Synaptic vesicle</location>
    </subcellularLocation>
    <subcellularLocation>
        <location evidence="1">Postsynaptic density</location>
    </subcellularLocation>
    <subcellularLocation>
        <location evidence="1">Perikaryon</location>
    </subcellularLocation>
    <subcellularLocation>
        <location evidence="1">Cell projection</location>
        <location evidence="1">Neuron projection</location>
    </subcellularLocation>
    <text evidence="1">Predominantly in the nucleus, but some amounts were also found in the cytoplasm. Oxidative stress stimulates its shuttling from the cytoplasm into the nucleus. Recruited to nuclear bodies via its interaction with ZBTB16. Localizes to the cell soma and neuritis and only slightly to the nucleus in the neurons of most brain areas.</text>
</comment>
<comment type="PTM">
    <text evidence="1">Auto-ubiquitinated.</text>
</comment>
<comment type="similarity">
    <text evidence="4">Belongs to the TRAFAC class dynamin-like GTPase superfamily. GB1/RHD3 GTPase family. GB1 subfamily.</text>
</comment>
<accession>Q08DF2</accession>
<protein>
    <recommendedName>
        <fullName>RING finger protein 112</fullName>
        <ecNumber evidence="5">2.3.2.27</ecNumber>
    </recommendedName>
    <alternativeName>
        <fullName>Zinc finger protein 179</fullName>
    </alternativeName>
</protein>
<reference key="1">
    <citation type="submission" date="2006-09" db="EMBL/GenBank/DDBJ databases">
        <authorList>
            <consortium name="NIH - Mammalian Gene Collection (MGC) project"/>
        </authorList>
    </citation>
    <scope>NUCLEOTIDE SEQUENCE [LARGE SCALE MRNA]</scope>
    <source>
        <strain>Hereford</strain>
        <tissue>Brain cortex</tissue>
    </source>
</reference>
<proteinExistence type="evidence at transcript level"/>
<name>RN112_BOVIN</name>